<keyword id="KW-0240">DNA-directed RNA polymerase</keyword>
<keyword id="KW-0548">Nucleotidyltransferase</keyword>
<keyword id="KW-0804">Transcription</keyword>
<keyword id="KW-0808">Transferase</keyword>
<protein>
    <recommendedName>
        <fullName evidence="1">DNA-directed RNA polymerase subunit omega</fullName>
        <shortName evidence="1">RNAP omega subunit</shortName>
        <ecNumber evidence="1">2.7.7.6</ecNumber>
    </recommendedName>
    <alternativeName>
        <fullName evidence="1">RNA polymerase omega subunit</fullName>
    </alternativeName>
    <alternativeName>
        <fullName evidence="1">Transcriptase subunit omega</fullName>
    </alternativeName>
</protein>
<dbReference type="EC" id="2.7.7.6" evidence="1"/>
<dbReference type="EMBL" id="CP001635">
    <property type="protein sequence ID" value="ACS20941.1"/>
    <property type="molecule type" value="Genomic_DNA"/>
</dbReference>
<dbReference type="SMR" id="C5CYY0"/>
<dbReference type="STRING" id="543728.Vapar_4330"/>
<dbReference type="KEGG" id="vap:Vapar_4330"/>
<dbReference type="eggNOG" id="COG1758">
    <property type="taxonomic scope" value="Bacteria"/>
</dbReference>
<dbReference type="HOGENOM" id="CLU_125406_5_1_4"/>
<dbReference type="OrthoDB" id="9796300at2"/>
<dbReference type="GO" id="GO:0000428">
    <property type="term" value="C:DNA-directed RNA polymerase complex"/>
    <property type="evidence" value="ECO:0007669"/>
    <property type="project" value="UniProtKB-KW"/>
</dbReference>
<dbReference type="GO" id="GO:0003677">
    <property type="term" value="F:DNA binding"/>
    <property type="evidence" value="ECO:0007669"/>
    <property type="project" value="UniProtKB-UniRule"/>
</dbReference>
<dbReference type="GO" id="GO:0003899">
    <property type="term" value="F:DNA-directed RNA polymerase activity"/>
    <property type="evidence" value="ECO:0007669"/>
    <property type="project" value="UniProtKB-UniRule"/>
</dbReference>
<dbReference type="GO" id="GO:0006351">
    <property type="term" value="P:DNA-templated transcription"/>
    <property type="evidence" value="ECO:0007669"/>
    <property type="project" value="UniProtKB-UniRule"/>
</dbReference>
<dbReference type="Gene3D" id="3.90.940.10">
    <property type="match status" value="1"/>
</dbReference>
<dbReference type="HAMAP" id="MF_00366">
    <property type="entry name" value="RNApol_bact_RpoZ"/>
    <property type="match status" value="1"/>
</dbReference>
<dbReference type="InterPro" id="IPR003716">
    <property type="entry name" value="DNA-dir_RNA_pol_omega"/>
</dbReference>
<dbReference type="InterPro" id="IPR006110">
    <property type="entry name" value="Pol_omega/Rpo6/RPB6"/>
</dbReference>
<dbReference type="InterPro" id="IPR036161">
    <property type="entry name" value="RPB6/omega-like_sf"/>
</dbReference>
<dbReference type="NCBIfam" id="TIGR00690">
    <property type="entry name" value="rpoZ"/>
    <property type="match status" value="1"/>
</dbReference>
<dbReference type="PANTHER" id="PTHR34476">
    <property type="entry name" value="DNA-DIRECTED RNA POLYMERASE SUBUNIT OMEGA"/>
    <property type="match status" value="1"/>
</dbReference>
<dbReference type="PANTHER" id="PTHR34476:SF1">
    <property type="entry name" value="DNA-DIRECTED RNA POLYMERASE SUBUNIT OMEGA"/>
    <property type="match status" value="1"/>
</dbReference>
<dbReference type="Pfam" id="PF01192">
    <property type="entry name" value="RNA_pol_Rpb6"/>
    <property type="match status" value="1"/>
</dbReference>
<dbReference type="SMART" id="SM01409">
    <property type="entry name" value="RNA_pol_Rpb6"/>
    <property type="match status" value="1"/>
</dbReference>
<dbReference type="SUPFAM" id="SSF63562">
    <property type="entry name" value="RPB6/omega subunit-like"/>
    <property type="match status" value="1"/>
</dbReference>
<organism>
    <name type="scientific">Variovorax paradoxus (strain S110)</name>
    <dbReference type="NCBI Taxonomy" id="543728"/>
    <lineage>
        <taxon>Bacteria</taxon>
        <taxon>Pseudomonadati</taxon>
        <taxon>Pseudomonadota</taxon>
        <taxon>Betaproteobacteria</taxon>
        <taxon>Burkholderiales</taxon>
        <taxon>Comamonadaceae</taxon>
        <taxon>Variovorax</taxon>
    </lineage>
</organism>
<evidence type="ECO:0000255" key="1">
    <source>
        <dbReference type="HAMAP-Rule" id="MF_00366"/>
    </source>
</evidence>
<name>RPOZ_VARPS</name>
<accession>C5CYY0</accession>
<proteinExistence type="inferred from homology"/>
<gene>
    <name evidence="1" type="primary">rpoZ</name>
    <name type="ordered locus">Vapar_4330</name>
</gene>
<sequence>MARITVEDCLLQIPNRFQLVLAATYRARMLSQGHAPKIESKNKPAVTALREIAEGKIGLEMLKKVPG</sequence>
<reference key="1">
    <citation type="journal article" date="2011" name="J. Bacteriol.">
        <title>Complete genome sequence of the metabolically versatile plant growth-promoting endophyte, Variovorax paradoxus S110.</title>
        <authorList>
            <person name="Han J.I."/>
            <person name="Choi H.K."/>
            <person name="Lee S.W."/>
            <person name="Orwin P.M."/>
            <person name="Kim J."/>
            <person name="Laroe S.L."/>
            <person name="Kim T.G."/>
            <person name="O'Neil J."/>
            <person name="Leadbetter J.R."/>
            <person name="Lee S.Y."/>
            <person name="Hur C.G."/>
            <person name="Spain J.C."/>
            <person name="Ovchinnikova G."/>
            <person name="Goodwin L."/>
            <person name="Han C."/>
        </authorList>
    </citation>
    <scope>NUCLEOTIDE SEQUENCE [LARGE SCALE GENOMIC DNA]</scope>
    <source>
        <strain>S110</strain>
    </source>
</reference>
<comment type="function">
    <text evidence="1">Promotes RNA polymerase assembly. Latches the N- and C-terminal regions of the beta' subunit thereby facilitating its interaction with the beta and alpha subunits.</text>
</comment>
<comment type="catalytic activity">
    <reaction evidence="1">
        <text>RNA(n) + a ribonucleoside 5'-triphosphate = RNA(n+1) + diphosphate</text>
        <dbReference type="Rhea" id="RHEA:21248"/>
        <dbReference type="Rhea" id="RHEA-COMP:14527"/>
        <dbReference type="Rhea" id="RHEA-COMP:17342"/>
        <dbReference type="ChEBI" id="CHEBI:33019"/>
        <dbReference type="ChEBI" id="CHEBI:61557"/>
        <dbReference type="ChEBI" id="CHEBI:140395"/>
        <dbReference type="EC" id="2.7.7.6"/>
    </reaction>
</comment>
<comment type="subunit">
    <text evidence="1">The RNAP catalytic core consists of 2 alpha, 1 beta, 1 beta' and 1 omega subunit. When a sigma factor is associated with the core the holoenzyme is formed, which can initiate transcription.</text>
</comment>
<comment type="similarity">
    <text evidence="1">Belongs to the RNA polymerase subunit omega family.</text>
</comment>
<feature type="chain" id="PRO_1000205535" description="DNA-directed RNA polymerase subunit omega">
    <location>
        <begin position="1"/>
        <end position="67"/>
    </location>
</feature>